<feature type="chain" id="PRO_0000174896" description="Co-chaperonin GroES 1">
    <location>
        <begin position="1"/>
        <end position="96"/>
    </location>
</feature>
<reference key="1">
    <citation type="submission" date="2002-12" db="EMBL/GenBank/DDBJ databases">
        <title>Complete genome sequence of Vibrio vulnificus CMCP6.</title>
        <authorList>
            <person name="Rhee J.H."/>
            <person name="Kim S.Y."/>
            <person name="Chung S.S."/>
            <person name="Kim J.J."/>
            <person name="Moon Y.H."/>
            <person name="Jeong H."/>
            <person name="Choy H.E."/>
        </authorList>
    </citation>
    <scope>NUCLEOTIDE SEQUENCE [LARGE SCALE GENOMIC DNA]</scope>
    <source>
        <strain>CMCP6</strain>
    </source>
</reference>
<comment type="function">
    <text evidence="1">Together with the chaperonin GroEL, plays an essential role in assisting protein folding. The GroEL-GroES system forms a nano-cage that allows encapsulation of the non-native substrate proteins and provides a physical environment optimized to promote and accelerate protein folding. GroES binds to the apical surface of the GroEL ring, thereby capping the opening of the GroEL channel.</text>
</comment>
<comment type="subunit">
    <text evidence="1">Heptamer of 7 subunits arranged in a ring. Interacts with the chaperonin GroEL.</text>
</comment>
<comment type="subcellular location">
    <subcellularLocation>
        <location evidence="1">Cytoplasm</location>
    </subcellularLocation>
</comment>
<comment type="similarity">
    <text evidence="1 2">Belongs to the GroES chaperonin family.</text>
</comment>
<accession>Q8CWL1</accession>
<sequence>MNIRPLHDRVIVERQEVESKSAGGIVLTGSAAEKSTRGVVLAVGKGRILENGTVQPLDVKVGDTVIFAESYGTKTEKIDGKEVLIMSENDIMAIVD</sequence>
<proteinExistence type="inferred from homology"/>
<keyword id="KW-0143">Chaperone</keyword>
<keyword id="KW-0963">Cytoplasm</keyword>
<gene>
    <name evidence="1" type="primary">groES1</name>
    <name evidence="1" type="synonym">groS1</name>
    <name type="ordered locus">VV1_1259</name>
</gene>
<organism>
    <name type="scientific">Vibrio vulnificus (strain CMCP6)</name>
    <dbReference type="NCBI Taxonomy" id="216895"/>
    <lineage>
        <taxon>Bacteria</taxon>
        <taxon>Pseudomonadati</taxon>
        <taxon>Pseudomonadota</taxon>
        <taxon>Gammaproteobacteria</taxon>
        <taxon>Vibrionales</taxon>
        <taxon>Vibrionaceae</taxon>
        <taxon>Vibrio</taxon>
    </lineage>
</organism>
<protein>
    <recommendedName>
        <fullName evidence="1">Co-chaperonin GroES 1</fullName>
    </recommendedName>
    <alternativeName>
        <fullName evidence="1">10 kDa chaperonin 1</fullName>
    </alternativeName>
    <alternativeName>
        <fullName evidence="1">Chaperonin-10 1</fullName>
        <shortName evidence="1">Cpn10 1</shortName>
    </alternativeName>
</protein>
<evidence type="ECO:0000255" key="1">
    <source>
        <dbReference type="HAMAP-Rule" id="MF_00580"/>
    </source>
</evidence>
<evidence type="ECO:0000305" key="2"/>
<dbReference type="EMBL" id="AE016795">
    <property type="protein sequence ID" value="AAO09715.1"/>
    <property type="molecule type" value="Genomic_DNA"/>
</dbReference>
<dbReference type="RefSeq" id="WP_011079244.1">
    <property type="nucleotide sequence ID" value="NC_004459.3"/>
</dbReference>
<dbReference type="SMR" id="Q8CWL1"/>
<dbReference type="KEGG" id="vvu:VV1_1259"/>
<dbReference type="HOGENOM" id="CLU_132825_1_1_6"/>
<dbReference type="Proteomes" id="UP000002275">
    <property type="component" value="Chromosome 1"/>
</dbReference>
<dbReference type="GO" id="GO:0005737">
    <property type="term" value="C:cytoplasm"/>
    <property type="evidence" value="ECO:0007669"/>
    <property type="project" value="UniProtKB-SubCell"/>
</dbReference>
<dbReference type="GO" id="GO:0005524">
    <property type="term" value="F:ATP binding"/>
    <property type="evidence" value="ECO:0007669"/>
    <property type="project" value="InterPro"/>
</dbReference>
<dbReference type="GO" id="GO:0046872">
    <property type="term" value="F:metal ion binding"/>
    <property type="evidence" value="ECO:0007669"/>
    <property type="project" value="TreeGrafter"/>
</dbReference>
<dbReference type="GO" id="GO:0044183">
    <property type="term" value="F:protein folding chaperone"/>
    <property type="evidence" value="ECO:0007669"/>
    <property type="project" value="InterPro"/>
</dbReference>
<dbReference type="GO" id="GO:0051087">
    <property type="term" value="F:protein-folding chaperone binding"/>
    <property type="evidence" value="ECO:0007669"/>
    <property type="project" value="TreeGrafter"/>
</dbReference>
<dbReference type="GO" id="GO:0051082">
    <property type="term" value="F:unfolded protein binding"/>
    <property type="evidence" value="ECO:0007669"/>
    <property type="project" value="TreeGrafter"/>
</dbReference>
<dbReference type="GO" id="GO:0051085">
    <property type="term" value="P:chaperone cofactor-dependent protein refolding"/>
    <property type="evidence" value="ECO:0007669"/>
    <property type="project" value="TreeGrafter"/>
</dbReference>
<dbReference type="CDD" id="cd00320">
    <property type="entry name" value="cpn10"/>
    <property type="match status" value="1"/>
</dbReference>
<dbReference type="FunFam" id="2.30.33.40:FF:000001">
    <property type="entry name" value="10 kDa chaperonin"/>
    <property type="match status" value="1"/>
</dbReference>
<dbReference type="Gene3D" id="2.30.33.40">
    <property type="entry name" value="GroES chaperonin"/>
    <property type="match status" value="1"/>
</dbReference>
<dbReference type="HAMAP" id="MF_00580">
    <property type="entry name" value="CH10"/>
    <property type="match status" value="1"/>
</dbReference>
<dbReference type="InterPro" id="IPR020818">
    <property type="entry name" value="Chaperonin_GroES"/>
</dbReference>
<dbReference type="InterPro" id="IPR037124">
    <property type="entry name" value="Chaperonin_GroES_sf"/>
</dbReference>
<dbReference type="InterPro" id="IPR018369">
    <property type="entry name" value="Chaprnonin_Cpn10_CS"/>
</dbReference>
<dbReference type="InterPro" id="IPR011032">
    <property type="entry name" value="GroES-like_sf"/>
</dbReference>
<dbReference type="NCBIfam" id="NF001526">
    <property type="entry name" value="PRK00364.1-1"/>
    <property type="match status" value="1"/>
</dbReference>
<dbReference type="NCBIfam" id="NF001527">
    <property type="entry name" value="PRK00364.1-2"/>
    <property type="match status" value="1"/>
</dbReference>
<dbReference type="NCBIfam" id="NF001531">
    <property type="entry name" value="PRK00364.2-2"/>
    <property type="match status" value="1"/>
</dbReference>
<dbReference type="PANTHER" id="PTHR10772">
    <property type="entry name" value="10 KDA HEAT SHOCK PROTEIN"/>
    <property type="match status" value="1"/>
</dbReference>
<dbReference type="PANTHER" id="PTHR10772:SF58">
    <property type="entry name" value="CO-CHAPERONIN GROES"/>
    <property type="match status" value="1"/>
</dbReference>
<dbReference type="Pfam" id="PF00166">
    <property type="entry name" value="Cpn10"/>
    <property type="match status" value="1"/>
</dbReference>
<dbReference type="PRINTS" id="PR00297">
    <property type="entry name" value="CHAPERONIN10"/>
</dbReference>
<dbReference type="SMART" id="SM00883">
    <property type="entry name" value="Cpn10"/>
    <property type="match status" value="1"/>
</dbReference>
<dbReference type="SUPFAM" id="SSF50129">
    <property type="entry name" value="GroES-like"/>
    <property type="match status" value="1"/>
</dbReference>
<dbReference type="PROSITE" id="PS00681">
    <property type="entry name" value="CHAPERONINS_CPN10"/>
    <property type="match status" value="1"/>
</dbReference>
<name>CH101_VIBVU</name>